<dbReference type="EC" id="2.1.3.2" evidence="1"/>
<dbReference type="EMBL" id="AE000516">
    <property type="protein sequence ID" value="AAK45689.1"/>
    <property type="molecule type" value="Genomic_DNA"/>
</dbReference>
<dbReference type="PIR" id="A70959">
    <property type="entry name" value="A70959"/>
</dbReference>
<dbReference type="RefSeq" id="WP_003407200.1">
    <property type="nucleotide sequence ID" value="NZ_KK341227.1"/>
</dbReference>
<dbReference type="SMR" id="P9WIT6"/>
<dbReference type="KEGG" id="mtc:MT1424"/>
<dbReference type="PATRIC" id="fig|83331.31.peg.1530"/>
<dbReference type="HOGENOM" id="CLU_043846_2_0_11"/>
<dbReference type="UniPathway" id="UPA00070">
    <property type="reaction ID" value="UER00116"/>
</dbReference>
<dbReference type="Proteomes" id="UP000001020">
    <property type="component" value="Chromosome"/>
</dbReference>
<dbReference type="GO" id="GO:0005829">
    <property type="term" value="C:cytosol"/>
    <property type="evidence" value="ECO:0007669"/>
    <property type="project" value="TreeGrafter"/>
</dbReference>
<dbReference type="GO" id="GO:0016597">
    <property type="term" value="F:amino acid binding"/>
    <property type="evidence" value="ECO:0007669"/>
    <property type="project" value="InterPro"/>
</dbReference>
<dbReference type="GO" id="GO:0004070">
    <property type="term" value="F:aspartate carbamoyltransferase activity"/>
    <property type="evidence" value="ECO:0007669"/>
    <property type="project" value="UniProtKB-UniRule"/>
</dbReference>
<dbReference type="GO" id="GO:0006207">
    <property type="term" value="P:'de novo' pyrimidine nucleobase biosynthetic process"/>
    <property type="evidence" value="ECO:0007669"/>
    <property type="project" value="InterPro"/>
</dbReference>
<dbReference type="GO" id="GO:0044205">
    <property type="term" value="P:'de novo' UMP biosynthetic process"/>
    <property type="evidence" value="ECO:0007669"/>
    <property type="project" value="UniProtKB-UniRule"/>
</dbReference>
<dbReference type="GO" id="GO:0006520">
    <property type="term" value="P:amino acid metabolic process"/>
    <property type="evidence" value="ECO:0007669"/>
    <property type="project" value="InterPro"/>
</dbReference>
<dbReference type="FunFam" id="3.40.50.1370:FF:000007">
    <property type="entry name" value="Aspartate carbamoyltransferase"/>
    <property type="match status" value="1"/>
</dbReference>
<dbReference type="FunFam" id="3.40.50.1370:FF:000012">
    <property type="entry name" value="Aspartate carbamoyltransferase"/>
    <property type="match status" value="1"/>
</dbReference>
<dbReference type="Gene3D" id="3.40.50.1370">
    <property type="entry name" value="Aspartate/ornithine carbamoyltransferase"/>
    <property type="match status" value="2"/>
</dbReference>
<dbReference type="HAMAP" id="MF_00001">
    <property type="entry name" value="Asp_carb_tr"/>
    <property type="match status" value="1"/>
</dbReference>
<dbReference type="InterPro" id="IPR006132">
    <property type="entry name" value="Asp/Orn_carbamoyltranf_P-bd"/>
</dbReference>
<dbReference type="InterPro" id="IPR006130">
    <property type="entry name" value="Asp/Orn_carbamoylTrfase"/>
</dbReference>
<dbReference type="InterPro" id="IPR036901">
    <property type="entry name" value="Asp/Orn_carbamoylTrfase_sf"/>
</dbReference>
<dbReference type="InterPro" id="IPR002082">
    <property type="entry name" value="Asp_carbamoyltransf"/>
</dbReference>
<dbReference type="InterPro" id="IPR006131">
    <property type="entry name" value="Asp_carbamoyltransf_Asp/Orn-bd"/>
</dbReference>
<dbReference type="NCBIfam" id="TIGR00670">
    <property type="entry name" value="asp_carb_tr"/>
    <property type="match status" value="1"/>
</dbReference>
<dbReference type="NCBIfam" id="NF002032">
    <property type="entry name" value="PRK00856.1"/>
    <property type="match status" value="1"/>
</dbReference>
<dbReference type="PANTHER" id="PTHR45753:SF6">
    <property type="entry name" value="ASPARTATE CARBAMOYLTRANSFERASE"/>
    <property type="match status" value="1"/>
</dbReference>
<dbReference type="PANTHER" id="PTHR45753">
    <property type="entry name" value="ORNITHINE CARBAMOYLTRANSFERASE, MITOCHONDRIAL"/>
    <property type="match status" value="1"/>
</dbReference>
<dbReference type="Pfam" id="PF00185">
    <property type="entry name" value="OTCace"/>
    <property type="match status" value="1"/>
</dbReference>
<dbReference type="Pfam" id="PF02729">
    <property type="entry name" value="OTCace_N"/>
    <property type="match status" value="1"/>
</dbReference>
<dbReference type="PRINTS" id="PR00100">
    <property type="entry name" value="AOTCASE"/>
</dbReference>
<dbReference type="PRINTS" id="PR00101">
    <property type="entry name" value="ATCASE"/>
</dbReference>
<dbReference type="SUPFAM" id="SSF53671">
    <property type="entry name" value="Aspartate/ornithine carbamoyltransferase"/>
    <property type="match status" value="1"/>
</dbReference>
<dbReference type="PROSITE" id="PS00097">
    <property type="entry name" value="CARBAMOYLTRANSFERASE"/>
    <property type="match status" value="1"/>
</dbReference>
<sequence>MTPRHLLTAADLSRDDATAILDDADRFAQALVGRDIKKLPTLRGRTVVTMFYENSTRTRVSFEVAGKWMSADVINVSAAGSSVGKGESLRDTALTLRAAGADALIIRHPASGAAHLLAQWTGAHNDGPAVINAGDGTHEHPTQALLDALTIRQRLGGIEGRRIVIVGDILHSRVARSNVMLLDTLGAEVVLVAPPTLLPVGVTGWPATVSHDFDAELPAADAVLMLRVQAERMNGGFFPSVREYSVRYGLTERRQAMLPGHAVVLHPGPMVRGMEITSSVADSSQSAVLQQVSNGVQVRMAVLFHVLVGAQDAGKEGAA</sequence>
<feature type="chain" id="PRO_0000427948" description="Aspartate carbamoyltransferase catalytic subunit">
    <location>
        <begin position="1"/>
        <end position="319"/>
    </location>
</feature>
<feature type="binding site" evidence="1">
    <location>
        <position position="57"/>
    </location>
    <ligand>
        <name>carbamoyl phosphate</name>
        <dbReference type="ChEBI" id="CHEBI:58228"/>
    </ligand>
</feature>
<feature type="binding site" evidence="1">
    <location>
        <position position="58"/>
    </location>
    <ligand>
        <name>carbamoyl phosphate</name>
        <dbReference type="ChEBI" id="CHEBI:58228"/>
    </ligand>
</feature>
<feature type="binding site" evidence="1">
    <location>
        <position position="85"/>
    </location>
    <ligand>
        <name>L-aspartate</name>
        <dbReference type="ChEBI" id="CHEBI:29991"/>
    </ligand>
</feature>
<feature type="binding site" evidence="1">
    <location>
        <position position="107"/>
    </location>
    <ligand>
        <name>carbamoyl phosphate</name>
        <dbReference type="ChEBI" id="CHEBI:58228"/>
    </ligand>
</feature>
<feature type="binding site" evidence="1">
    <location>
        <position position="140"/>
    </location>
    <ligand>
        <name>carbamoyl phosphate</name>
        <dbReference type="ChEBI" id="CHEBI:58228"/>
    </ligand>
</feature>
<feature type="binding site" evidence="1">
    <location>
        <position position="143"/>
    </location>
    <ligand>
        <name>carbamoyl phosphate</name>
        <dbReference type="ChEBI" id="CHEBI:58228"/>
    </ligand>
</feature>
<feature type="binding site" evidence="1">
    <location>
        <position position="173"/>
    </location>
    <ligand>
        <name>L-aspartate</name>
        <dbReference type="ChEBI" id="CHEBI:29991"/>
    </ligand>
</feature>
<feature type="binding site" evidence="1">
    <location>
        <position position="227"/>
    </location>
    <ligand>
        <name>L-aspartate</name>
        <dbReference type="ChEBI" id="CHEBI:29991"/>
    </ligand>
</feature>
<feature type="binding site" evidence="1">
    <location>
        <position position="268"/>
    </location>
    <ligand>
        <name>carbamoyl phosphate</name>
        <dbReference type="ChEBI" id="CHEBI:58228"/>
    </ligand>
</feature>
<feature type="binding site" evidence="1">
    <location>
        <position position="269"/>
    </location>
    <ligand>
        <name>carbamoyl phosphate</name>
        <dbReference type="ChEBI" id="CHEBI:58228"/>
    </ligand>
</feature>
<proteinExistence type="inferred from homology"/>
<keyword id="KW-0665">Pyrimidine biosynthesis</keyword>
<keyword id="KW-1185">Reference proteome</keyword>
<keyword id="KW-0808">Transferase</keyword>
<organism>
    <name type="scientific">Mycobacterium tuberculosis (strain CDC 1551 / Oshkosh)</name>
    <dbReference type="NCBI Taxonomy" id="83331"/>
    <lineage>
        <taxon>Bacteria</taxon>
        <taxon>Bacillati</taxon>
        <taxon>Actinomycetota</taxon>
        <taxon>Actinomycetes</taxon>
        <taxon>Mycobacteriales</taxon>
        <taxon>Mycobacteriaceae</taxon>
        <taxon>Mycobacterium</taxon>
        <taxon>Mycobacterium tuberculosis complex</taxon>
    </lineage>
</organism>
<reference key="1">
    <citation type="journal article" date="2002" name="J. Bacteriol.">
        <title>Whole-genome comparison of Mycobacterium tuberculosis clinical and laboratory strains.</title>
        <authorList>
            <person name="Fleischmann R.D."/>
            <person name="Alland D."/>
            <person name="Eisen J.A."/>
            <person name="Carpenter L."/>
            <person name="White O."/>
            <person name="Peterson J.D."/>
            <person name="DeBoy R.T."/>
            <person name="Dodson R.J."/>
            <person name="Gwinn M.L."/>
            <person name="Haft D.H."/>
            <person name="Hickey E.K."/>
            <person name="Kolonay J.F."/>
            <person name="Nelson W.C."/>
            <person name="Umayam L.A."/>
            <person name="Ermolaeva M.D."/>
            <person name="Salzberg S.L."/>
            <person name="Delcher A."/>
            <person name="Utterback T.R."/>
            <person name="Weidman J.F."/>
            <person name="Khouri H.M."/>
            <person name="Gill J."/>
            <person name="Mikula A."/>
            <person name="Bishai W."/>
            <person name="Jacobs W.R. Jr."/>
            <person name="Venter J.C."/>
            <person name="Fraser C.M."/>
        </authorList>
    </citation>
    <scope>NUCLEOTIDE SEQUENCE [LARGE SCALE GENOMIC DNA]</scope>
    <source>
        <strain>CDC 1551 / Oshkosh</strain>
    </source>
</reference>
<comment type="function">
    <text evidence="1">Catalyzes the condensation of carbamoyl phosphate and aspartate to form carbamoyl aspartate and inorganic phosphate, the committed step in the de novo pyrimidine nucleotide biosynthesis pathway.</text>
</comment>
<comment type="catalytic activity">
    <reaction evidence="1">
        <text>carbamoyl phosphate + L-aspartate = N-carbamoyl-L-aspartate + phosphate + H(+)</text>
        <dbReference type="Rhea" id="RHEA:20013"/>
        <dbReference type="ChEBI" id="CHEBI:15378"/>
        <dbReference type="ChEBI" id="CHEBI:29991"/>
        <dbReference type="ChEBI" id="CHEBI:32814"/>
        <dbReference type="ChEBI" id="CHEBI:43474"/>
        <dbReference type="ChEBI" id="CHEBI:58228"/>
        <dbReference type="EC" id="2.1.3.2"/>
    </reaction>
</comment>
<comment type="pathway">
    <text evidence="1">Pyrimidine metabolism; UMP biosynthesis via de novo pathway; (S)-dihydroorotate from bicarbonate: step 2/3.</text>
</comment>
<comment type="subunit">
    <text evidence="1">Heterododecamer (2C3:3R2) of six catalytic PyrB chains organized as two trimers (C3), and six regulatory PyrI chains organized as three dimers (R2).</text>
</comment>
<comment type="similarity">
    <text evidence="1 2">Belongs to the aspartate/ornithine carbamoyltransferase superfamily. ATCase family.</text>
</comment>
<name>PYRB_MYCTO</name>
<gene>
    <name evidence="1" type="primary">pyrB</name>
    <name type="ordered locus">MT1424</name>
</gene>
<accession>P9WIT6</accession>
<accession>L0T981</accession>
<accession>P65613</accession>
<accession>P71808</accession>
<evidence type="ECO:0000255" key="1">
    <source>
        <dbReference type="HAMAP-Rule" id="MF_00001"/>
    </source>
</evidence>
<evidence type="ECO:0000305" key="2"/>
<protein>
    <recommendedName>
        <fullName evidence="1">Aspartate carbamoyltransferase catalytic subunit</fullName>
        <ecNumber evidence="1">2.1.3.2</ecNumber>
    </recommendedName>
    <alternativeName>
        <fullName evidence="1">Aspartate transcarbamylase</fullName>
        <shortName evidence="1">ATCase</shortName>
    </alternativeName>
</protein>